<sequence length="118" mass="13177">MARIAGINIPDQKHTVIALTAIFGIGKTRSQAICAAAGIAENVKISELSEEQIETLRDEVAKYTVEGDLRREVTLSIKRLMDIGCYRGLRHRRGLPVRGQRTKTNARTRKGPRKPIKK</sequence>
<name>RS13_EDWI9</name>
<organism>
    <name type="scientific">Edwardsiella ictaluri (strain 93-146)</name>
    <dbReference type="NCBI Taxonomy" id="634503"/>
    <lineage>
        <taxon>Bacteria</taxon>
        <taxon>Pseudomonadati</taxon>
        <taxon>Pseudomonadota</taxon>
        <taxon>Gammaproteobacteria</taxon>
        <taxon>Enterobacterales</taxon>
        <taxon>Hafniaceae</taxon>
        <taxon>Edwardsiella</taxon>
    </lineage>
</organism>
<dbReference type="EMBL" id="CP001600">
    <property type="protein sequence ID" value="ACR70701.1"/>
    <property type="molecule type" value="Genomic_DNA"/>
</dbReference>
<dbReference type="RefSeq" id="WP_012850017.1">
    <property type="nucleotide sequence ID" value="NZ_CP169062.1"/>
</dbReference>
<dbReference type="SMR" id="C5BF29"/>
<dbReference type="STRING" id="67780.B6E78_09460"/>
<dbReference type="GeneID" id="72529979"/>
<dbReference type="KEGG" id="eic:NT01EI_3572"/>
<dbReference type="HOGENOM" id="CLU_103849_1_2_6"/>
<dbReference type="OrthoDB" id="9803610at2"/>
<dbReference type="Proteomes" id="UP000001485">
    <property type="component" value="Chromosome"/>
</dbReference>
<dbReference type="GO" id="GO:0005829">
    <property type="term" value="C:cytosol"/>
    <property type="evidence" value="ECO:0007669"/>
    <property type="project" value="TreeGrafter"/>
</dbReference>
<dbReference type="GO" id="GO:0015935">
    <property type="term" value="C:small ribosomal subunit"/>
    <property type="evidence" value="ECO:0007669"/>
    <property type="project" value="TreeGrafter"/>
</dbReference>
<dbReference type="GO" id="GO:0019843">
    <property type="term" value="F:rRNA binding"/>
    <property type="evidence" value="ECO:0007669"/>
    <property type="project" value="UniProtKB-UniRule"/>
</dbReference>
<dbReference type="GO" id="GO:0003735">
    <property type="term" value="F:structural constituent of ribosome"/>
    <property type="evidence" value="ECO:0007669"/>
    <property type="project" value="InterPro"/>
</dbReference>
<dbReference type="GO" id="GO:0000049">
    <property type="term" value="F:tRNA binding"/>
    <property type="evidence" value="ECO:0007669"/>
    <property type="project" value="UniProtKB-UniRule"/>
</dbReference>
<dbReference type="GO" id="GO:0006412">
    <property type="term" value="P:translation"/>
    <property type="evidence" value="ECO:0007669"/>
    <property type="project" value="UniProtKB-UniRule"/>
</dbReference>
<dbReference type="FunFam" id="1.10.8.50:FF:000001">
    <property type="entry name" value="30S ribosomal protein S13"/>
    <property type="match status" value="1"/>
</dbReference>
<dbReference type="FunFam" id="4.10.910.10:FF:000001">
    <property type="entry name" value="30S ribosomal protein S13"/>
    <property type="match status" value="1"/>
</dbReference>
<dbReference type="Gene3D" id="1.10.8.50">
    <property type="match status" value="1"/>
</dbReference>
<dbReference type="Gene3D" id="4.10.910.10">
    <property type="entry name" value="30s ribosomal protein s13, domain 2"/>
    <property type="match status" value="1"/>
</dbReference>
<dbReference type="HAMAP" id="MF_01315">
    <property type="entry name" value="Ribosomal_uS13"/>
    <property type="match status" value="1"/>
</dbReference>
<dbReference type="InterPro" id="IPR027437">
    <property type="entry name" value="Rbsml_uS13_C"/>
</dbReference>
<dbReference type="InterPro" id="IPR001892">
    <property type="entry name" value="Ribosomal_uS13"/>
</dbReference>
<dbReference type="InterPro" id="IPR010979">
    <property type="entry name" value="Ribosomal_uS13-like_H2TH"/>
</dbReference>
<dbReference type="InterPro" id="IPR019980">
    <property type="entry name" value="Ribosomal_uS13_bac-type"/>
</dbReference>
<dbReference type="InterPro" id="IPR018269">
    <property type="entry name" value="Ribosomal_uS13_CS"/>
</dbReference>
<dbReference type="NCBIfam" id="TIGR03631">
    <property type="entry name" value="uS13_bact"/>
    <property type="match status" value="1"/>
</dbReference>
<dbReference type="PANTHER" id="PTHR10871">
    <property type="entry name" value="30S RIBOSOMAL PROTEIN S13/40S RIBOSOMAL PROTEIN S18"/>
    <property type="match status" value="1"/>
</dbReference>
<dbReference type="PANTHER" id="PTHR10871:SF1">
    <property type="entry name" value="SMALL RIBOSOMAL SUBUNIT PROTEIN US13M"/>
    <property type="match status" value="1"/>
</dbReference>
<dbReference type="Pfam" id="PF00416">
    <property type="entry name" value="Ribosomal_S13"/>
    <property type="match status" value="1"/>
</dbReference>
<dbReference type="PIRSF" id="PIRSF002134">
    <property type="entry name" value="Ribosomal_S13"/>
    <property type="match status" value="1"/>
</dbReference>
<dbReference type="SUPFAM" id="SSF46946">
    <property type="entry name" value="S13-like H2TH domain"/>
    <property type="match status" value="1"/>
</dbReference>
<dbReference type="PROSITE" id="PS00646">
    <property type="entry name" value="RIBOSOMAL_S13_1"/>
    <property type="match status" value="1"/>
</dbReference>
<dbReference type="PROSITE" id="PS50159">
    <property type="entry name" value="RIBOSOMAL_S13_2"/>
    <property type="match status" value="1"/>
</dbReference>
<feature type="chain" id="PRO_1000214391" description="Small ribosomal subunit protein uS13">
    <location>
        <begin position="1"/>
        <end position="118"/>
    </location>
</feature>
<feature type="region of interest" description="Disordered" evidence="2">
    <location>
        <begin position="94"/>
        <end position="118"/>
    </location>
</feature>
<reference key="1">
    <citation type="submission" date="2009-03" db="EMBL/GenBank/DDBJ databases">
        <title>Complete genome sequence of Edwardsiella ictaluri 93-146.</title>
        <authorList>
            <person name="Williams M.L."/>
            <person name="Gillaspy A.F."/>
            <person name="Dyer D.W."/>
            <person name="Thune R.L."/>
            <person name="Waldbieser G.C."/>
            <person name="Schuster S.C."/>
            <person name="Gipson J."/>
            <person name="Zaitshik J."/>
            <person name="Landry C."/>
            <person name="Lawrence M.L."/>
        </authorList>
    </citation>
    <scope>NUCLEOTIDE SEQUENCE [LARGE SCALE GENOMIC DNA]</scope>
    <source>
        <strain>93-146</strain>
    </source>
</reference>
<comment type="function">
    <text evidence="1">Located at the top of the head of the 30S subunit, it contacts several helices of the 16S rRNA. In the 70S ribosome it contacts the 23S rRNA (bridge B1a) and protein L5 of the 50S subunit (bridge B1b), connecting the 2 subunits; these bridges are implicated in subunit movement. Contacts the tRNAs in the A and P-sites.</text>
</comment>
<comment type="subunit">
    <text evidence="1">Part of the 30S ribosomal subunit. Forms a loose heterodimer with protein S19. Forms two bridges to the 50S subunit in the 70S ribosome.</text>
</comment>
<comment type="similarity">
    <text evidence="1">Belongs to the universal ribosomal protein uS13 family.</text>
</comment>
<keyword id="KW-0687">Ribonucleoprotein</keyword>
<keyword id="KW-0689">Ribosomal protein</keyword>
<keyword id="KW-0694">RNA-binding</keyword>
<keyword id="KW-0699">rRNA-binding</keyword>
<keyword id="KW-0820">tRNA-binding</keyword>
<evidence type="ECO:0000255" key="1">
    <source>
        <dbReference type="HAMAP-Rule" id="MF_01315"/>
    </source>
</evidence>
<evidence type="ECO:0000256" key="2">
    <source>
        <dbReference type="SAM" id="MobiDB-lite"/>
    </source>
</evidence>
<evidence type="ECO:0000305" key="3"/>
<gene>
    <name evidence="1" type="primary">rpsM</name>
    <name type="ordered locus">NT01EI_3572</name>
</gene>
<proteinExistence type="inferred from homology"/>
<accession>C5BF29</accession>
<protein>
    <recommendedName>
        <fullName evidence="1">Small ribosomal subunit protein uS13</fullName>
    </recommendedName>
    <alternativeName>
        <fullName evidence="3">30S ribosomal protein S13</fullName>
    </alternativeName>
</protein>